<comment type="function">
    <text evidence="1 5">Plays a role in cellular signaling via Rho-related GTP-binding proteins and activation of transcription factor SRF. Targets TJP1 to cell junctions (By similarity). In cortical neurons, may play a role in glutaminergic signal transduction through interaction with the NMDA receptor subunit GRIN1.</text>
</comment>
<comment type="subunit">
    <text evidence="1">Interacts with DSP, MPRIP and TJP1/ZO1. Interaction with MPRIP inhibits the activation of transcription factor SRF (By similarity). Interacts with GRIN1. Interacts with DYNLL1 (By similarity).</text>
</comment>
<comment type="subcellular location">
    <subcellularLocation>
        <location evidence="6">Cytoplasm</location>
        <location evidence="6">Cytoskeleton</location>
    </subcellularLocation>
    <subcellularLocation>
        <location evidence="5 6">Cell membrane</location>
        <topology evidence="2">Peripheral membrane protein</topology>
        <orientation evidence="2">Cytoplasmic side</orientation>
    </subcellularLocation>
    <subcellularLocation>
        <location evidence="2">Cytoplasm</location>
        <location evidence="2">Myofibril</location>
        <location evidence="2">Sarcomere</location>
        <location evidence="2">I band</location>
    </subcellularLocation>
    <subcellularLocation>
        <location evidence="2">Cytoplasm</location>
        <location evidence="2">Myofibril</location>
        <location evidence="2">Sarcomere</location>
        <location evidence="2">Z line</location>
    </subcellularLocation>
    <subcellularLocation>
        <location evidence="7 8">Cell junction</location>
    </subcellularLocation>
    <text evidence="5 6 8">Detected predominantly at the intercalated disk in cardiomyocytes, and at low levels on sarcomeric Z disKs. Colocalizes with F-actin. Colocalizes with cortical actin (PubMed:20093627). In neurons, colocalizes with GRIN1 in postsynaptic neurites (PubMed:18849881). In heart, localizes at area composita, the mixed-type junctional structure composed of both desmosomal and adherens junctional proteins (PubMed:31384490).</text>
</comment>
<comment type="tissue specificity">
    <text evidence="5 6 7 8">Detected in brain, heart and lung (at protein level) (PubMed:31384490). Expressed in optic nerve sheath envelope(at protein level) (PubMed:29445566).</text>
</comment>
<comment type="similarity">
    <text evidence="9">Belongs to the MYZAP family.</text>
</comment>
<sequence length="466" mass="53955">MLRSTSTVTLLSGGSAKSPGTPSRRANVCRLRLTVPPENPVPQQKEKKIERKDQPPELSNGESTKKLPQGVVYGVVRRSDPNQQKEMVVYGWSTNQLKEEMNYIKDVRATLEKVRKRMYGDYDEMRQKIRQLTQDLSVSHAQQDYLDSHIQAQASALDSFNAMNSALALDSVGLQKTLVDVTLENSNIKDQIRHLQQTYEASMDKLREKQRQLEAAQMENQLLKMRVESSQEANAEVMREMTRKLYSQYEEKLQEAQRKHSAEKEVLLEETNSFLKAIEEANKKMEAAELSLEEKDQRIGELDRLIERMEKERHQLQLQLLEHETEMSGEMADFDKNRYQQLEEASASLRERIRHLDDMVHCQQKKVKQMVEEIESLKKKVQQKQLLILQLLEKISFLEGENNELQSRLDYLTETQPKTEVETREIGVGCDLLPSTTGRTREIAVPSRSYTPYTRVLELTSKKTLT</sequence>
<gene>
    <name type="primary">Myzap</name>
    <name type="synonym">Myozap</name>
</gene>
<dbReference type="EMBL" id="BC089899">
    <property type="protein sequence ID" value="AAH89899.1"/>
    <property type="molecule type" value="mRNA"/>
</dbReference>
<dbReference type="RefSeq" id="NP_001014233.1">
    <property type="nucleotide sequence ID" value="NM_001014211.1"/>
</dbReference>
<dbReference type="SMR" id="Q5EB94"/>
<dbReference type="BioGRID" id="263959">
    <property type="interactions" value="2"/>
</dbReference>
<dbReference type="FunCoup" id="Q5EB94">
    <property type="interactions" value="97"/>
</dbReference>
<dbReference type="STRING" id="10116.ENSRNOP00000068576"/>
<dbReference type="CarbonylDB" id="Q5EB94"/>
<dbReference type="GlyGen" id="Q5EB94">
    <property type="glycosylation" value="1 site"/>
</dbReference>
<dbReference type="iPTMnet" id="Q5EB94"/>
<dbReference type="PhosphoSitePlus" id="Q5EB94"/>
<dbReference type="PaxDb" id="10116-ENSRNOP00000023153"/>
<dbReference type="Ensembl" id="ENSRNOT00000077999.2">
    <property type="protein sequence ID" value="ENSRNOP00000075263.1"/>
    <property type="gene ID" value="ENSRNOG00000057676.2"/>
</dbReference>
<dbReference type="GeneID" id="363091"/>
<dbReference type="KEGG" id="rno:363091"/>
<dbReference type="UCSC" id="RGD:1359197">
    <property type="organism name" value="rat"/>
</dbReference>
<dbReference type="AGR" id="RGD:1359197"/>
<dbReference type="CTD" id="100820829"/>
<dbReference type="RGD" id="1359197">
    <property type="gene designation" value="Myzap"/>
</dbReference>
<dbReference type="eggNOG" id="ENOG502QSEE">
    <property type="taxonomic scope" value="Eukaryota"/>
</dbReference>
<dbReference type="GeneTree" id="ENSGT00950000183065"/>
<dbReference type="HOGENOM" id="CLU_022112_0_0_1"/>
<dbReference type="InParanoid" id="Q5EB94"/>
<dbReference type="OrthoDB" id="72745at9989"/>
<dbReference type="PhylomeDB" id="Q5EB94"/>
<dbReference type="TreeFam" id="TF331627"/>
<dbReference type="PRO" id="PR:Q5EB94"/>
<dbReference type="Proteomes" id="UP000002494">
    <property type="component" value="Chromosome 8"/>
</dbReference>
<dbReference type="Bgee" id="ENSRNOG00000057676">
    <property type="expression patterns" value="Expressed in heart and 20 other cell types or tissues"/>
</dbReference>
<dbReference type="ExpressionAtlas" id="Q5EB94">
    <property type="expression patterns" value="baseline and differential"/>
</dbReference>
<dbReference type="GO" id="GO:0070161">
    <property type="term" value="C:anchoring junction"/>
    <property type="evidence" value="ECO:0007669"/>
    <property type="project" value="UniProtKB-SubCell"/>
</dbReference>
<dbReference type="GO" id="GO:0030864">
    <property type="term" value="C:cortical actin cytoskeleton"/>
    <property type="evidence" value="ECO:0000266"/>
    <property type="project" value="RGD"/>
</dbReference>
<dbReference type="GO" id="GO:0009898">
    <property type="term" value="C:cytoplasmic side of plasma membrane"/>
    <property type="evidence" value="ECO:0000250"/>
    <property type="project" value="UniProtKB"/>
</dbReference>
<dbReference type="GO" id="GO:0031674">
    <property type="term" value="C:I band"/>
    <property type="evidence" value="ECO:0000250"/>
    <property type="project" value="UniProtKB"/>
</dbReference>
<dbReference type="GO" id="GO:0016020">
    <property type="term" value="C:membrane"/>
    <property type="evidence" value="ECO:0000314"/>
    <property type="project" value="UniProtKB"/>
</dbReference>
<dbReference type="GO" id="GO:0005665">
    <property type="term" value="C:RNA polymerase II, core complex"/>
    <property type="evidence" value="ECO:0000318"/>
    <property type="project" value="GO_Central"/>
</dbReference>
<dbReference type="GO" id="GO:0030018">
    <property type="term" value="C:Z disc"/>
    <property type="evidence" value="ECO:0007669"/>
    <property type="project" value="UniProtKB-SubCell"/>
</dbReference>
<dbReference type="GO" id="GO:0035556">
    <property type="term" value="P:intracellular signal transduction"/>
    <property type="evidence" value="ECO:0000250"/>
    <property type="project" value="UniProtKB"/>
</dbReference>
<dbReference type="InterPro" id="IPR051375">
    <property type="entry name" value="Tuftelin_GRINL1A/MYZAP/CCD68"/>
</dbReference>
<dbReference type="PANTHER" id="PTHR23171">
    <property type="entry name" value="GDOWN1"/>
    <property type="match status" value="1"/>
</dbReference>
<dbReference type="PANTHER" id="PTHR23171:SF2">
    <property type="entry name" value="MYOCARDIAL ZONULA ADHERENS PROTEIN"/>
    <property type="match status" value="1"/>
</dbReference>
<keyword id="KW-0965">Cell junction</keyword>
<keyword id="KW-1003">Cell membrane</keyword>
<keyword id="KW-0175">Coiled coil</keyword>
<keyword id="KW-0963">Cytoplasm</keyword>
<keyword id="KW-0206">Cytoskeleton</keyword>
<keyword id="KW-0472">Membrane</keyword>
<keyword id="KW-1185">Reference proteome</keyword>
<keyword id="KW-0732">Signal</keyword>
<accession>Q5EB94</accession>
<feature type="signal peptide" evidence="3">
    <location>
        <begin position="1"/>
        <end position="16"/>
    </location>
</feature>
<feature type="chain" id="PRO_0000326227" description="Myocardial zonula adherens protein">
    <location>
        <begin position="17"/>
        <end position="466"/>
    </location>
</feature>
<feature type="region of interest" description="Disordered" evidence="4">
    <location>
        <begin position="1"/>
        <end position="66"/>
    </location>
</feature>
<feature type="coiled-coil region" evidence="3">
    <location>
        <begin position="95"/>
        <end position="137"/>
    </location>
</feature>
<feature type="coiled-coil region" evidence="3">
    <location>
        <begin position="180"/>
        <end position="415"/>
    </location>
</feature>
<feature type="compositionally biased region" description="Low complexity" evidence="4">
    <location>
        <begin position="1"/>
        <end position="12"/>
    </location>
</feature>
<feature type="compositionally biased region" description="Basic and acidic residues" evidence="4">
    <location>
        <begin position="44"/>
        <end position="55"/>
    </location>
</feature>
<evidence type="ECO:0000250" key="1"/>
<evidence type="ECO:0000250" key="2">
    <source>
        <dbReference type="UniProtKB" id="Q3UIJ9"/>
    </source>
</evidence>
<evidence type="ECO:0000255" key="3"/>
<evidence type="ECO:0000256" key="4">
    <source>
        <dbReference type="SAM" id="MobiDB-lite"/>
    </source>
</evidence>
<evidence type="ECO:0000269" key="5">
    <source>
    </source>
</evidence>
<evidence type="ECO:0000269" key="6">
    <source>
    </source>
</evidence>
<evidence type="ECO:0000269" key="7">
    <source>
    </source>
</evidence>
<evidence type="ECO:0000269" key="8">
    <source>
    </source>
</evidence>
<evidence type="ECO:0000305" key="9"/>
<reference key="1">
    <citation type="journal article" date="2004" name="Genome Res.">
        <title>The status, quality, and expansion of the NIH full-length cDNA project: the Mammalian Gene Collection (MGC).</title>
        <authorList>
            <consortium name="The MGC Project Team"/>
        </authorList>
    </citation>
    <scope>NUCLEOTIDE SEQUENCE [LARGE SCALE MRNA]</scope>
    <source>
        <tissue>Thymus</tissue>
    </source>
</reference>
<reference key="2">
    <citation type="journal article" date="2008" name="NeuroReport">
        <title>GRINL1A colocalizes with N-methyl D-aspartate receptor NR1 subunit and reduces N-methyl D-aspartate toxicity.</title>
        <authorList>
            <person name="Roginski R.S."/>
            <person name="Goubaeva F."/>
            <person name="Mikami M."/>
            <person name="Fried-Cassorla E."/>
            <person name="Nair M.R."/>
            <person name="Yang J."/>
        </authorList>
    </citation>
    <scope>FUNCTION</scope>
    <scope>INTERACTION WITH GRIN1</scope>
    <scope>SUBCELLULAR LOCATION</scope>
    <scope>TISSUE SPECIFICITY</scope>
</reference>
<reference key="3">
    <citation type="journal article" date="2010" name="Circ. Res.">
        <title>Myozap, a novel intercalated disc protein, activates serum response factor-dependent signaling and is required to maintain cardiac function in vivo.</title>
        <authorList>
            <person name="Seeger T.S."/>
            <person name="Frank D."/>
            <person name="Rohr C."/>
            <person name="Will R."/>
            <person name="Just S."/>
            <person name="Grund C."/>
            <person name="Lyon R."/>
            <person name="Luedde M."/>
            <person name="Koegl M."/>
            <person name="Sheikh F."/>
            <person name="Rottbauer W."/>
            <person name="Franke W.W."/>
            <person name="Katus H.A."/>
            <person name="Olson E.N."/>
            <person name="Frey N."/>
        </authorList>
    </citation>
    <scope>SUBCELLULAR LOCATION</scope>
    <scope>TISSUE SPECIFICITY</scope>
</reference>
<reference key="4">
    <citation type="journal article" date="2018" name="Dermatol. Pract. Concept.">
        <title>Patients affected by endemic pemphigus foliaceus in Colombia, South America exhibit autoantibodies to optic nerve sheath envelope cell junctions.</title>
        <authorList>
            <person name="Abreu-Velez A.M."/>
            <person name="Gao W."/>
            <person name="Howard M.S."/>
        </authorList>
    </citation>
    <scope>TISSUE SPECIFICITY</scope>
    <scope>SUBCELLULAR LOCATION</scope>
</reference>
<reference key="5">
    <citation type="journal article" date="2019" name="Dermatol. Pract. Concept.">
        <title>Involvement of the Areae Compositae of the Heart in Endemic Pemphigus Foliaceus.</title>
        <authorList>
            <person name="Abreu-Velez A.M."/>
            <person name="Upegui-Zapata Y.A."/>
            <person name="Valencia-Yepes C.A."/>
            <person name="Upegui-Quiceno E."/>
            <person name="Jimenez-Echavarria A.M."/>
            <person name="Nino-Pulido C.D."/>
            <person name="Smoller B.R."/>
            <person name="Howard M.S."/>
        </authorList>
    </citation>
    <scope>TISSUE SPECIFICITY</scope>
    <scope>SUBCELLULAR LOCATION</scope>
</reference>
<name>MYZAP_RAT</name>
<organism>
    <name type="scientific">Rattus norvegicus</name>
    <name type="common">Rat</name>
    <dbReference type="NCBI Taxonomy" id="10116"/>
    <lineage>
        <taxon>Eukaryota</taxon>
        <taxon>Metazoa</taxon>
        <taxon>Chordata</taxon>
        <taxon>Craniata</taxon>
        <taxon>Vertebrata</taxon>
        <taxon>Euteleostomi</taxon>
        <taxon>Mammalia</taxon>
        <taxon>Eutheria</taxon>
        <taxon>Euarchontoglires</taxon>
        <taxon>Glires</taxon>
        <taxon>Rodentia</taxon>
        <taxon>Myomorpha</taxon>
        <taxon>Muroidea</taxon>
        <taxon>Muridae</taxon>
        <taxon>Murinae</taxon>
        <taxon>Rattus</taxon>
    </lineage>
</organism>
<proteinExistence type="evidence at protein level"/>
<protein>
    <recommendedName>
        <fullName>Myocardial zonula adherens protein</fullName>
    </recommendedName>
</protein>